<keyword id="KW-0002">3D-structure</keyword>
<keyword id="KW-0034">Amyloid</keyword>
<keyword id="KW-1003">Cell membrane</keyword>
<keyword id="KW-0186">Copper</keyword>
<keyword id="KW-0903">Direct protein sequencing</keyword>
<keyword id="KW-1015">Disulfide bond</keyword>
<keyword id="KW-0325">Glycoprotein</keyword>
<keyword id="KW-0336">GPI-anchor</keyword>
<keyword id="KW-0449">Lipoprotein</keyword>
<keyword id="KW-0472">Membrane</keyword>
<keyword id="KW-0479">Metal-binding</keyword>
<keyword id="KW-0640">Prion</keyword>
<keyword id="KW-1185">Reference proteome</keyword>
<keyword id="KW-0677">Repeat</keyword>
<keyword id="KW-0732">Signal</keyword>
<organism>
    <name type="scientific">Gallus gallus</name>
    <name type="common">Chicken</name>
    <dbReference type="NCBI Taxonomy" id="9031"/>
    <lineage>
        <taxon>Eukaryota</taxon>
        <taxon>Metazoa</taxon>
        <taxon>Chordata</taxon>
        <taxon>Craniata</taxon>
        <taxon>Vertebrata</taxon>
        <taxon>Euteleostomi</taxon>
        <taxon>Archelosauria</taxon>
        <taxon>Archosauria</taxon>
        <taxon>Dinosauria</taxon>
        <taxon>Saurischia</taxon>
        <taxon>Theropoda</taxon>
        <taxon>Coelurosauria</taxon>
        <taxon>Aves</taxon>
        <taxon>Neognathae</taxon>
        <taxon>Galloanserae</taxon>
        <taxon>Galliformes</taxon>
        <taxon>Phasianidae</taxon>
        <taxon>Phasianinae</taxon>
        <taxon>Gallus</taxon>
    </lineage>
</organism>
<name>PRIO_CHICK</name>
<feature type="signal peptide" evidence="6">
    <location>
        <begin position="1"/>
        <end position="24"/>
    </location>
</feature>
<feature type="chain" id="PRO_0000025741" description="Major prion protein homolog">
    <location>
        <begin position="25"/>
        <end position="248"/>
    </location>
</feature>
<feature type="propeptide" id="PRO_0000025742" description="Removed in mature form" evidence="4">
    <location>
        <begin position="249"/>
        <end position="273"/>
    </location>
</feature>
<feature type="repeat" description="1">
    <location>
        <begin position="42"/>
        <end position="47"/>
    </location>
</feature>
<feature type="repeat" description="2">
    <location>
        <begin position="48"/>
        <end position="53"/>
    </location>
</feature>
<feature type="repeat" description="3">
    <location>
        <begin position="54"/>
        <end position="59"/>
    </location>
</feature>
<feature type="repeat" description="4">
    <location>
        <begin position="60"/>
        <end position="65"/>
    </location>
</feature>
<feature type="repeat" description="5">
    <location>
        <begin position="66"/>
        <end position="71"/>
    </location>
</feature>
<feature type="repeat" description="6">
    <location>
        <begin position="72"/>
        <end position="77"/>
    </location>
</feature>
<feature type="repeat" description="7">
    <location>
        <begin position="78"/>
        <end position="83"/>
    </location>
</feature>
<feature type="repeat" description="8">
    <location>
        <begin position="84"/>
        <end position="89"/>
    </location>
</feature>
<feature type="region of interest" description="Disordered" evidence="5">
    <location>
        <begin position="25"/>
        <end position="121"/>
    </location>
</feature>
<feature type="region of interest" description="8 X 6 AA tandem repeats of [HR]-[NQ]-P-G-Y-P">
    <location>
        <begin position="42"/>
        <end position="89"/>
    </location>
</feature>
<feature type="compositionally biased region" description="Low complexity" evidence="5">
    <location>
        <begin position="51"/>
        <end position="94"/>
    </location>
</feature>
<feature type="compositionally biased region" description="Polar residues" evidence="5">
    <location>
        <begin position="101"/>
        <end position="111"/>
    </location>
</feature>
<feature type="binding site" evidence="1">
    <location>
        <position position="66"/>
    </location>
    <ligand>
        <name>Cu(2+)</name>
        <dbReference type="ChEBI" id="CHEBI:29036"/>
        <label>1</label>
    </ligand>
</feature>
<feature type="binding site" evidence="1">
    <location>
        <position position="72"/>
    </location>
    <ligand>
        <name>Cu(2+)</name>
        <dbReference type="ChEBI" id="CHEBI:29036"/>
        <label>2</label>
    </ligand>
</feature>
<feature type="binding site" evidence="1">
    <location>
        <position position="78"/>
    </location>
    <ligand>
        <name>Cu(2+)</name>
        <dbReference type="ChEBI" id="CHEBI:29036"/>
        <label>3</label>
    </ligand>
</feature>
<feature type="binding site" evidence="1">
    <location>
        <position position="90"/>
    </location>
    <ligand>
        <name>Cu(2+)</name>
        <dbReference type="ChEBI" id="CHEBI:29036"/>
        <label>4</label>
    </ligand>
</feature>
<feature type="binding site" evidence="1">
    <location>
        <position position="93"/>
    </location>
    <ligand>
        <name>Cu(2+)</name>
        <dbReference type="ChEBI" id="CHEBI:29036"/>
        <label>4</label>
    </ligand>
</feature>
<feature type="lipid moiety-binding region" description="GPI-anchor amidated serine" evidence="2">
    <location>
        <position position="248"/>
    </location>
</feature>
<feature type="glycosylation site" description="N-linked (GlcNAc...) asparagine" evidence="4">
    <location>
        <position position="194"/>
    </location>
</feature>
<feature type="glycosylation site" description="N-linked (GlcNAc...) asparagine" evidence="4">
    <location>
        <position position="209"/>
    </location>
</feature>
<feature type="glycosylation site" description="N-linked (GlcNAc...) asparagine" evidence="4">
    <location>
        <position position="218"/>
    </location>
</feature>
<feature type="disulfide bond">
    <location>
        <begin position="192"/>
        <end position="237"/>
    </location>
</feature>
<feature type="sequence conflict" description="In Ref. 2; AA sequence." evidence="7" ref="2">
    <location>
        <begin position="78"/>
        <end position="83"/>
    </location>
</feature>
<feature type="sequence conflict" description="In Ref. 2; AAA49041." evidence="7" ref="2">
    <original>S</original>
    <variation>R</variation>
    <location>
        <position position="156"/>
    </location>
</feature>
<feature type="strand" evidence="8">
    <location>
        <begin position="134"/>
        <end position="136"/>
    </location>
</feature>
<feature type="helix" evidence="8">
    <location>
        <begin position="157"/>
        <end position="167"/>
    </location>
</feature>
<feature type="helix" evidence="8">
    <location>
        <begin position="185"/>
        <end position="200"/>
    </location>
</feature>
<feature type="helix" evidence="8">
    <location>
        <begin position="219"/>
        <end position="246"/>
    </location>
</feature>
<evidence type="ECO:0000250" key="1">
    <source>
        <dbReference type="UniProtKB" id="P04156"/>
    </source>
</evidence>
<evidence type="ECO:0000250" key="2">
    <source>
        <dbReference type="UniProtKB" id="P04273"/>
    </source>
</evidence>
<evidence type="ECO:0000250" key="3">
    <source>
        <dbReference type="UniProtKB" id="P04925"/>
    </source>
</evidence>
<evidence type="ECO:0000255" key="4"/>
<evidence type="ECO:0000256" key="5">
    <source>
        <dbReference type="SAM" id="MobiDB-lite"/>
    </source>
</evidence>
<evidence type="ECO:0000269" key="6">
    <source>
    </source>
</evidence>
<evidence type="ECO:0000305" key="7"/>
<evidence type="ECO:0007829" key="8">
    <source>
        <dbReference type="PDB" id="1U3M"/>
    </source>
</evidence>
<proteinExistence type="evidence at protein level"/>
<reference key="1">
    <citation type="journal article" date="1992" name="Proc. Natl. Acad. Sci. U.S.A.">
        <title>Molecular cloning of a candidate chicken prion protein.</title>
        <authorList>
            <person name="Gabriel J.M."/>
            <person name="Oesch B."/>
            <person name="Kretzschmar H."/>
            <person name="Scott M."/>
            <person name="Prusiner S.B."/>
        </authorList>
    </citation>
    <scope>NUCLEOTIDE SEQUENCE [GENOMIC DNA]</scope>
</reference>
<reference key="2">
    <citation type="journal article" date="1991" name="Proc. Natl. Acad. Sci. U.S.A.">
        <title>A prion-like protein from chicken brain copurifies with an acetylcholine receptor-inducing activity.</title>
        <authorList>
            <person name="Harris D.A."/>
            <person name="Falls D.L."/>
            <person name="Johnson F.A."/>
            <person name="Fischbach G.D."/>
        </authorList>
    </citation>
    <scope>NUCLEOTIDE SEQUENCE [MRNA]</scope>
    <scope>PROTEIN SEQUENCE OF 25-51</scope>
    <source>
        <tissue>Brain</tissue>
    </source>
</reference>
<reference key="3">
    <citation type="journal article" date="1990" name="Cold Spring Harb. Symp. Quant. Biol.">
        <title>Mr 42,000 ARIA: a protein that may regulate the accumulation of acetylcholine receptors at developing chick neuromuscular junctions.</title>
        <authorList>
            <person name="Falls D.L."/>
            <person name="Harris D.A."/>
            <person name="Johnson F.A."/>
            <person name="Morgan M.M."/>
            <person name="Corfas G."/>
            <person name="Fischbach G.D."/>
        </authorList>
    </citation>
    <scope>REVIEW</scope>
</reference>
<reference key="4">
    <citation type="journal article" date="2005" name="Proc. Natl. Acad. Sci. U.S.A.">
        <title>Prion protein NMR structures of chickens, turtles, and frogs.</title>
        <authorList>
            <person name="Calzolai L."/>
            <person name="Lysek D.A."/>
            <person name="Perez D.R."/>
            <person name="Guentert P."/>
            <person name="Wuethrich K."/>
        </authorList>
    </citation>
    <scope>STRUCTURE BY NMR OF 134-248</scope>
</reference>
<sequence length="273" mass="29909">MARLLTTCCLLALLLAACTDVALSKKGKGKPSGGGWGAGSHRQPSYPRQPGYPHNPGYPHNPGYPHNPGYPHNPGYPHNPGYPQNPGYPHNPGYPGWGQGYNPSSGGSYHNQKPWKPPKTNFKHVAGAAAAGAVVGGLGGYAMGRVMSGMNYHFDSPDEYRWWSENSARYPNRVYYRDYSSPVPQDVFVADCFNITVTEYSIGPAAKKNTSEAVAAANQTEVEMENKVVTKVIREMCVQQYREYRLASGIQLHPADTWLAVLLLLLTTLFAMH</sequence>
<gene>
    <name type="primary">PRNP</name>
    <name type="synonym">PRN-P</name>
</gene>
<comment type="function">
    <text evidence="1 3">Its primary physiological function is unclear. Has cytoprotective activity against internal or environmental stresses. May play a role in neuronal development and synaptic plasticity. May be required for neuronal myelin sheath maintenance. May play a role in iron uptake and iron homeostasis. Soluble oligomers are toxic to cultured neuroblastoma cells and induce apoptosis (in vitro). Association with GPC1 (via its heparan sulfate chains) targets PRNP to lipid rafts. Also provides Cu(2+) or Zn(2+) for the ascorbate-mediated GPC1 deaminase degradation of its heparan sulfate side chains (By similarity).</text>
</comment>
<comment type="subunit">
    <text evidence="1 3">Monomer and homodimer. Has a tendency to aggregate into amyloid fibrils containing a cross-beta spine, formed by a steric zipper of superposed beta-strands. Soluble oligomers may represent an intermediate stage on the path to fibril formation. Copper binding may promote oligomerization.</text>
</comment>
<comment type="subcellular location">
    <subcellularLocation>
        <location>Cell membrane</location>
        <topology>Lipid-anchor</topology>
        <topology>GPI-anchor</topology>
    </subcellularLocation>
</comment>
<comment type="tissue specificity">
    <text>Spinal cord and brain.</text>
</comment>
<comment type="similarity">
    <text evidence="7">Belongs to the prion family.</text>
</comment>
<dbReference type="EMBL" id="M95404">
    <property type="protein sequence ID" value="AAC28970.1"/>
    <property type="molecule type" value="Genomic_DNA"/>
</dbReference>
<dbReference type="EMBL" id="M61145">
    <property type="protein sequence ID" value="AAA49041.1"/>
    <property type="molecule type" value="mRNA"/>
</dbReference>
<dbReference type="PIR" id="A37372">
    <property type="entry name" value="A37372"/>
</dbReference>
<dbReference type="PIR" id="A41280">
    <property type="entry name" value="UJCH"/>
</dbReference>
<dbReference type="PIR" id="A46280">
    <property type="entry name" value="A46280"/>
</dbReference>
<dbReference type="RefSeq" id="NP_990796.2">
    <property type="nucleotide sequence ID" value="NM_205465.3"/>
</dbReference>
<dbReference type="RefSeq" id="XP_015152786.1">
    <property type="nucleotide sequence ID" value="XM_015297300.4"/>
</dbReference>
<dbReference type="RefSeq" id="XP_046787543.1">
    <property type="nucleotide sequence ID" value="XM_046931587.1"/>
</dbReference>
<dbReference type="PDB" id="1U3M">
    <property type="method" value="NMR"/>
    <property type="chains" value="A=134-248"/>
</dbReference>
<dbReference type="PDBsum" id="1U3M"/>
<dbReference type="SMR" id="P27177"/>
<dbReference type="FunCoup" id="P27177">
    <property type="interactions" value="162"/>
</dbReference>
<dbReference type="STRING" id="9031.ENSGALP00000040285"/>
<dbReference type="GlyCosmos" id="P27177">
    <property type="glycosylation" value="3 sites, No reported glycans"/>
</dbReference>
<dbReference type="GlyGen" id="P27177">
    <property type="glycosylation" value="3 sites"/>
</dbReference>
<dbReference type="PaxDb" id="9031-ENSGALP00000040285"/>
<dbReference type="Ensembl" id="ENSGALT00010044083.1">
    <property type="protein sequence ID" value="ENSGALP00010026203.1"/>
    <property type="gene ID" value="ENSGALG00010018261.1"/>
</dbReference>
<dbReference type="Ensembl" id="ENSGALT00010044089.1">
    <property type="protein sequence ID" value="ENSGALP00010026208.1"/>
    <property type="gene ID" value="ENSGALG00010018261.1"/>
</dbReference>
<dbReference type="Ensembl" id="ENSGALT00010044096.1">
    <property type="protein sequence ID" value="ENSGALP00010026214.1"/>
    <property type="gene ID" value="ENSGALG00010018261.1"/>
</dbReference>
<dbReference type="GeneID" id="396452"/>
<dbReference type="KEGG" id="gga:396452"/>
<dbReference type="CTD" id="5621"/>
<dbReference type="VEuPathDB" id="HostDB:geneid_396452"/>
<dbReference type="eggNOG" id="ENOG502S2A8">
    <property type="taxonomic scope" value="Eukaryota"/>
</dbReference>
<dbReference type="GeneTree" id="ENSGT00510000049083"/>
<dbReference type="HOGENOM" id="CLU_094631_0_0_1"/>
<dbReference type="InParanoid" id="P27177"/>
<dbReference type="OMA" id="QMCTTQY"/>
<dbReference type="OrthoDB" id="9048788at2759"/>
<dbReference type="PhylomeDB" id="P27177"/>
<dbReference type="TreeFam" id="TF105188"/>
<dbReference type="Reactome" id="R-GGA-163125">
    <property type="pathway name" value="Post-translational modification: synthesis of GPI-anchored proteins"/>
</dbReference>
<dbReference type="Reactome" id="R-GGA-9609523">
    <property type="pathway name" value="Insertion of tail-anchored proteins into the endoplasmic reticulum membrane"/>
</dbReference>
<dbReference type="EvolutionaryTrace" id="P27177"/>
<dbReference type="PRO" id="PR:P27177"/>
<dbReference type="Proteomes" id="UP000000539">
    <property type="component" value="Chromosome 22"/>
</dbReference>
<dbReference type="Bgee" id="ENSGALG00000000209">
    <property type="expression patterns" value="Expressed in cerebellum and 11 other cell types or tissues"/>
</dbReference>
<dbReference type="GO" id="GO:0005604">
    <property type="term" value="C:basement membrane"/>
    <property type="evidence" value="ECO:0000314"/>
    <property type="project" value="AgBase"/>
</dbReference>
<dbReference type="GO" id="GO:0005886">
    <property type="term" value="C:plasma membrane"/>
    <property type="evidence" value="ECO:0007669"/>
    <property type="project" value="UniProtKB-SubCell"/>
</dbReference>
<dbReference type="GO" id="GO:0098552">
    <property type="term" value="C:side of membrane"/>
    <property type="evidence" value="ECO:0007669"/>
    <property type="project" value="UniProtKB-KW"/>
</dbReference>
<dbReference type="GO" id="GO:0043083">
    <property type="term" value="C:synaptic cleft"/>
    <property type="evidence" value="ECO:0000314"/>
    <property type="project" value="AgBase"/>
</dbReference>
<dbReference type="GO" id="GO:0005507">
    <property type="term" value="F:copper ion binding"/>
    <property type="evidence" value="ECO:0000250"/>
    <property type="project" value="UniProtKB"/>
</dbReference>
<dbReference type="GO" id="GO:0051260">
    <property type="term" value="P:protein homooligomerization"/>
    <property type="evidence" value="ECO:0007669"/>
    <property type="project" value="InterPro"/>
</dbReference>
<dbReference type="DisProt" id="DP01663"/>
<dbReference type="Gene3D" id="1.10.790.10">
    <property type="entry name" value="Prion/Doppel protein, beta-ribbon domain"/>
    <property type="match status" value="1"/>
</dbReference>
<dbReference type="InterPro" id="IPR000817">
    <property type="entry name" value="Prion"/>
</dbReference>
<dbReference type="InterPro" id="IPR036924">
    <property type="entry name" value="Prion/Doppel_b-ribbon_dom_sf"/>
</dbReference>
<dbReference type="InterPro" id="IPR022416">
    <property type="entry name" value="Prion/Doppel_prot_b-ribbon_dom"/>
</dbReference>
<dbReference type="PANTHER" id="PTHR15506">
    <property type="entry name" value="DOPPEL PRION"/>
    <property type="match status" value="1"/>
</dbReference>
<dbReference type="PANTHER" id="PTHR15506:SF2">
    <property type="entry name" value="MAJOR PRION PROTEIN"/>
    <property type="match status" value="1"/>
</dbReference>
<dbReference type="Pfam" id="PF00377">
    <property type="entry name" value="Prion"/>
    <property type="match status" value="1"/>
</dbReference>
<dbReference type="SMART" id="SM00157">
    <property type="entry name" value="PRP"/>
    <property type="match status" value="1"/>
</dbReference>
<dbReference type="SUPFAM" id="SSF54098">
    <property type="entry name" value="Prion-like"/>
    <property type="match status" value="1"/>
</dbReference>
<dbReference type="PROSITE" id="PS00291">
    <property type="entry name" value="PRION_1"/>
    <property type="match status" value="1"/>
</dbReference>
<dbReference type="PROSITE" id="PS00706">
    <property type="entry name" value="PRION_2"/>
    <property type="match status" value="1"/>
</dbReference>
<protein>
    <recommendedName>
        <fullName>Major prion protein homolog</fullName>
    </recommendedName>
    <alternativeName>
        <fullName>65-21 protein</fullName>
    </alternativeName>
    <alternativeName>
        <fullName>Acetylcholine receptor-inducing activity</fullName>
        <shortName>ARIA</shortName>
    </alternativeName>
    <alternativeName>
        <fullName>PR-LP</fullName>
    </alternativeName>
</protein>
<accession>P27177</accession>